<evidence type="ECO:0000256" key="1">
    <source>
        <dbReference type="SAM" id="MobiDB-lite"/>
    </source>
</evidence>
<evidence type="ECO:0000269" key="2">
    <source>
    </source>
</evidence>
<gene>
    <name type="primary">C2orf80</name>
</gene>
<reference key="1">
    <citation type="journal article" date="2005" name="Nature">
        <title>Generation and annotation of the DNA sequences of human chromosomes 2 and 4.</title>
        <authorList>
            <person name="Hillier L.W."/>
            <person name="Graves T.A."/>
            <person name="Fulton R.S."/>
            <person name="Fulton L.A."/>
            <person name="Pepin K.H."/>
            <person name="Minx P."/>
            <person name="Wagner-McPherson C."/>
            <person name="Layman D."/>
            <person name="Wylie K."/>
            <person name="Sekhon M."/>
            <person name="Becker M.C."/>
            <person name="Fewell G.A."/>
            <person name="Delehaunty K.D."/>
            <person name="Miner T.L."/>
            <person name="Nash W.E."/>
            <person name="Kremitzki C."/>
            <person name="Oddy L."/>
            <person name="Du H."/>
            <person name="Sun H."/>
            <person name="Bradshaw-Cordum H."/>
            <person name="Ali J."/>
            <person name="Carter J."/>
            <person name="Cordes M."/>
            <person name="Harris A."/>
            <person name="Isak A."/>
            <person name="van Brunt A."/>
            <person name="Nguyen C."/>
            <person name="Du F."/>
            <person name="Courtney L."/>
            <person name="Kalicki J."/>
            <person name="Ozersky P."/>
            <person name="Abbott S."/>
            <person name="Armstrong J."/>
            <person name="Belter E.A."/>
            <person name="Caruso L."/>
            <person name="Cedroni M."/>
            <person name="Cotton M."/>
            <person name="Davidson T."/>
            <person name="Desai A."/>
            <person name="Elliott G."/>
            <person name="Erb T."/>
            <person name="Fronick C."/>
            <person name="Gaige T."/>
            <person name="Haakenson W."/>
            <person name="Haglund K."/>
            <person name="Holmes A."/>
            <person name="Harkins R."/>
            <person name="Kim K."/>
            <person name="Kruchowski S.S."/>
            <person name="Strong C.M."/>
            <person name="Grewal N."/>
            <person name="Goyea E."/>
            <person name="Hou S."/>
            <person name="Levy A."/>
            <person name="Martinka S."/>
            <person name="Mead K."/>
            <person name="McLellan M.D."/>
            <person name="Meyer R."/>
            <person name="Randall-Maher J."/>
            <person name="Tomlinson C."/>
            <person name="Dauphin-Kohlberg S."/>
            <person name="Kozlowicz-Reilly A."/>
            <person name="Shah N."/>
            <person name="Swearengen-Shahid S."/>
            <person name="Snider J."/>
            <person name="Strong J.T."/>
            <person name="Thompson J."/>
            <person name="Yoakum M."/>
            <person name="Leonard S."/>
            <person name="Pearman C."/>
            <person name="Trani L."/>
            <person name="Radionenko M."/>
            <person name="Waligorski J.E."/>
            <person name="Wang C."/>
            <person name="Rock S.M."/>
            <person name="Tin-Wollam A.-M."/>
            <person name="Maupin R."/>
            <person name="Latreille P."/>
            <person name="Wendl M.C."/>
            <person name="Yang S.-P."/>
            <person name="Pohl C."/>
            <person name="Wallis J.W."/>
            <person name="Spieth J."/>
            <person name="Bieri T.A."/>
            <person name="Berkowicz N."/>
            <person name="Nelson J.O."/>
            <person name="Osborne J."/>
            <person name="Ding L."/>
            <person name="Meyer R."/>
            <person name="Sabo A."/>
            <person name="Shotland Y."/>
            <person name="Sinha P."/>
            <person name="Wohldmann P.E."/>
            <person name="Cook L.L."/>
            <person name="Hickenbotham M.T."/>
            <person name="Eldred J."/>
            <person name="Williams D."/>
            <person name="Jones T.A."/>
            <person name="She X."/>
            <person name="Ciccarelli F.D."/>
            <person name="Izaurralde E."/>
            <person name="Taylor J."/>
            <person name="Schmutz J."/>
            <person name="Myers R.M."/>
            <person name="Cox D.R."/>
            <person name="Huang X."/>
            <person name="McPherson J.D."/>
            <person name="Mardis E.R."/>
            <person name="Clifton S.W."/>
            <person name="Warren W.C."/>
            <person name="Chinwalla A.T."/>
            <person name="Eddy S.R."/>
            <person name="Marra M.A."/>
            <person name="Ovcharenko I."/>
            <person name="Furey T.S."/>
            <person name="Miller W."/>
            <person name="Eichler E.E."/>
            <person name="Bork P."/>
            <person name="Suyama M."/>
            <person name="Torrents D."/>
            <person name="Waterston R.H."/>
            <person name="Wilson R.K."/>
        </authorList>
    </citation>
    <scope>NUCLEOTIDE SEQUENCE [LARGE SCALE GENOMIC DNA]</scope>
</reference>
<reference key="2">
    <citation type="journal article" date="2004" name="Genome Res.">
        <title>The status, quality, and expansion of the NIH full-length cDNA project: the Mammalian Gene Collection (MGC).</title>
        <authorList>
            <consortium name="The MGC Project Team"/>
        </authorList>
    </citation>
    <scope>NUCLEOTIDE SEQUENCE [LARGE SCALE MRNA]</scope>
    <scope>VARIANT ARG-130</scope>
    <source>
        <tissue>Brain</tissue>
    </source>
</reference>
<name>CB080_HUMAN</name>
<keyword id="KW-1185">Reference proteome</keyword>
<feature type="chain" id="PRO_0000326123" description="Uncharacterized protein C2orf80">
    <location>
        <begin position="1"/>
        <end position="193"/>
    </location>
</feature>
<feature type="region of interest" description="Disordered" evidence="1">
    <location>
        <begin position="155"/>
        <end position="193"/>
    </location>
</feature>
<feature type="compositionally biased region" description="Polar residues" evidence="1">
    <location>
        <begin position="176"/>
        <end position="186"/>
    </location>
</feature>
<feature type="sequence variant" id="VAR_050717" description="In dbSNP:rs11898181.">
    <original>R</original>
    <variation>H</variation>
    <location>
        <position position="82"/>
    </location>
</feature>
<feature type="sequence variant" id="VAR_050718" description="In dbSNP:rs6435421." evidence="2">
    <original>C</original>
    <variation>R</variation>
    <location>
        <position position="130"/>
    </location>
</feature>
<feature type="sequence variant" id="VAR_050719" description="In dbSNP:rs10804166.">
    <original>S</original>
    <variation>G</variation>
    <location>
        <position position="152"/>
    </location>
</feature>
<dbReference type="EMBL" id="AC016697">
    <property type="status" value="NOT_ANNOTATED_CDS"/>
    <property type="molecule type" value="Genomic_DNA"/>
</dbReference>
<dbReference type="EMBL" id="BC035737">
    <property type="protein sequence ID" value="AAH35737.1"/>
    <property type="molecule type" value="mRNA"/>
</dbReference>
<dbReference type="CCDS" id="CCDS42809.1"/>
<dbReference type="RefSeq" id="NP_001092804.2">
    <property type="nucleotide sequence ID" value="NM_001099334.3"/>
</dbReference>
<dbReference type="RefSeq" id="XP_016859565.1">
    <property type="nucleotide sequence ID" value="XM_017004076.2"/>
</dbReference>
<dbReference type="BioGRID" id="132959">
    <property type="interactions" value="1"/>
</dbReference>
<dbReference type="FunCoup" id="Q0P641">
    <property type="interactions" value="3"/>
</dbReference>
<dbReference type="STRING" id="9606.ENSP00000343171"/>
<dbReference type="BioMuta" id="C2orf80"/>
<dbReference type="DMDM" id="294862414"/>
<dbReference type="PaxDb" id="9606-ENSP00000343171"/>
<dbReference type="PeptideAtlas" id="Q0P641"/>
<dbReference type="Antibodypedia" id="52192">
    <property type="antibodies" value="34 antibodies from 7 providers"/>
</dbReference>
<dbReference type="DNASU" id="389073"/>
<dbReference type="Ensembl" id="ENST00000341287.9">
    <property type="protein sequence ID" value="ENSP00000343171.4"/>
    <property type="gene ID" value="ENSG00000188674.11"/>
</dbReference>
<dbReference type="GeneID" id="389073"/>
<dbReference type="KEGG" id="hsa:389073"/>
<dbReference type="MANE-Select" id="ENST00000341287.9">
    <property type="protein sequence ID" value="ENSP00000343171.4"/>
    <property type="RefSeq nucleotide sequence ID" value="NM_001099334.3"/>
    <property type="RefSeq protein sequence ID" value="NP_001092804.2"/>
</dbReference>
<dbReference type="UCSC" id="uc002vcr.4">
    <property type="organism name" value="human"/>
</dbReference>
<dbReference type="AGR" id="HGNC:34352"/>
<dbReference type="CTD" id="389073"/>
<dbReference type="DisGeNET" id="389073"/>
<dbReference type="GeneCards" id="C2orf80"/>
<dbReference type="HGNC" id="HGNC:34352">
    <property type="gene designation" value="C2orf80"/>
</dbReference>
<dbReference type="HPA" id="ENSG00000188674">
    <property type="expression patterns" value="Tissue enriched (brain)"/>
</dbReference>
<dbReference type="MIM" id="615536">
    <property type="type" value="gene"/>
</dbReference>
<dbReference type="neXtProt" id="NX_Q0P641"/>
<dbReference type="OpenTargets" id="ENSG00000188674"/>
<dbReference type="PharmGKB" id="PA162379620"/>
<dbReference type="VEuPathDB" id="HostDB:ENSG00000188674"/>
<dbReference type="eggNOG" id="ENOG502S0E2">
    <property type="taxonomic scope" value="Eukaryota"/>
</dbReference>
<dbReference type="GeneTree" id="ENSGT00390000004840"/>
<dbReference type="HOGENOM" id="CLU_094619_0_0_1"/>
<dbReference type="InParanoid" id="Q0P641"/>
<dbReference type="OMA" id="LDDMVHY"/>
<dbReference type="OrthoDB" id="9905607at2759"/>
<dbReference type="PAN-GO" id="Q0P641">
    <property type="GO annotations" value="0 GO annotations based on evolutionary models"/>
</dbReference>
<dbReference type="PhylomeDB" id="Q0P641"/>
<dbReference type="TreeFam" id="TF338259"/>
<dbReference type="PathwayCommons" id="Q0P641"/>
<dbReference type="BioGRID-ORCS" id="389073">
    <property type="hits" value="12 hits in 1114 CRISPR screens"/>
</dbReference>
<dbReference type="GenomeRNAi" id="389073"/>
<dbReference type="Pharos" id="Q0P641">
    <property type="development level" value="Tdark"/>
</dbReference>
<dbReference type="PRO" id="PR:Q0P641"/>
<dbReference type="Proteomes" id="UP000005640">
    <property type="component" value="Chromosome 2"/>
</dbReference>
<dbReference type="RNAct" id="Q0P641">
    <property type="molecule type" value="protein"/>
</dbReference>
<dbReference type="Bgee" id="ENSG00000188674">
    <property type="expression patterns" value="Expressed in endothelial cell and 107 other cell types or tissues"/>
</dbReference>
<dbReference type="ExpressionAtlas" id="Q0P641">
    <property type="expression patterns" value="baseline and differential"/>
</dbReference>
<dbReference type="InterPro" id="IPR038776">
    <property type="entry name" value="C2orf80"/>
</dbReference>
<dbReference type="PANTHER" id="PTHR36296:SF1">
    <property type="entry name" value="CHROMOSOME 2 OPEN READING FRAME 80"/>
    <property type="match status" value="1"/>
</dbReference>
<dbReference type="PANTHER" id="PTHR36296">
    <property type="entry name" value="GAMMA-CRYSTALLIN A"/>
    <property type="match status" value="1"/>
</dbReference>
<dbReference type="Pfam" id="PF17718">
    <property type="entry name" value="DUF5563"/>
    <property type="match status" value="1"/>
</dbReference>
<proteinExistence type="evidence at transcript level"/>
<accession>Q0P641</accession>
<accession>A6NKZ3</accession>
<sequence>MERRLIKKEMKKLLGDYIGIRLRENEFDPKGRRQLTFLDDMAHYDLAISVALQWLDPSEDLTWLEWEELKIPLHGRPIYPNRREREAMILSSYAGILMNSIPIEEVFKIYGADSSADSGTIKVPRVSSLCLSLHPFAMLTAPKAAAYARKQSVKSRKVTTNKNATSISAKEANATEWKSSQRFSDTQPKHKVT</sequence>
<protein>
    <recommendedName>
        <fullName>Uncharacterized protein C2orf80</fullName>
    </recommendedName>
</protein>
<organism>
    <name type="scientific">Homo sapiens</name>
    <name type="common">Human</name>
    <dbReference type="NCBI Taxonomy" id="9606"/>
    <lineage>
        <taxon>Eukaryota</taxon>
        <taxon>Metazoa</taxon>
        <taxon>Chordata</taxon>
        <taxon>Craniata</taxon>
        <taxon>Vertebrata</taxon>
        <taxon>Euteleostomi</taxon>
        <taxon>Mammalia</taxon>
        <taxon>Eutheria</taxon>
        <taxon>Euarchontoglires</taxon>
        <taxon>Primates</taxon>
        <taxon>Haplorrhini</taxon>
        <taxon>Catarrhini</taxon>
        <taxon>Hominidae</taxon>
        <taxon>Homo</taxon>
    </lineage>
</organism>